<reference key="1">
    <citation type="journal article" date="2010" name="Environ. Microbiol.">
        <title>The genome of Syntrophomonas wolfei: new insights into syntrophic metabolism and biohydrogen production.</title>
        <authorList>
            <person name="Sieber J.R."/>
            <person name="Sims D.R."/>
            <person name="Han C."/>
            <person name="Kim E."/>
            <person name="Lykidis A."/>
            <person name="Lapidus A.L."/>
            <person name="McDonnald E."/>
            <person name="Rohlin L."/>
            <person name="Culley D.E."/>
            <person name="Gunsalus R."/>
            <person name="McInerney M.J."/>
        </authorList>
    </citation>
    <scope>NUCLEOTIDE SEQUENCE [LARGE SCALE GENOMIC DNA]</scope>
    <source>
        <strain>DSM 2245B / Goettingen</strain>
    </source>
</reference>
<protein>
    <recommendedName>
        <fullName evidence="1">DNA-directed RNA polymerase subunit beta'</fullName>
        <shortName evidence="1">RNAP subunit beta'</shortName>
        <ecNumber evidence="1">2.7.7.6</ecNumber>
    </recommendedName>
    <alternativeName>
        <fullName evidence="1">RNA polymerase subunit beta'</fullName>
    </alternativeName>
    <alternativeName>
        <fullName evidence="1">Transcriptase subunit beta'</fullName>
    </alternativeName>
</protein>
<gene>
    <name evidence="1" type="primary">rpoC</name>
    <name type="ordered locus">Swol_2340</name>
</gene>
<accession>Q0AUH3</accession>
<evidence type="ECO:0000255" key="1">
    <source>
        <dbReference type="HAMAP-Rule" id="MF_01322"/>
    </source>
</evidence>
<organism>
    <name type="scientific">Syntrophomonas wolfei subsp. wolfei (strain DSM 2245B / Goettingen)</name>
    <dbReference type="NCBI Taxonomy" id="335541"/>
    <lineage>
        <taxon>Bacteria</taxon>
        <taxon>Bacillati</taxon>
        <taxon>Bacillota</taxon>
        <taxon>Clostridia</taxon>
        <taxon>Eubacteriales</taxon>
        <taxon>Syntrophomonadaceae</taxon>
        <taxon>Syntrophomonas</taxon>
    </lineage>
</organism>
<sequence length="1181" mass="132180">MIIFWKGENDLSENFDRIRISLASPEQIRSWSSGEVKKPETINYRTLRPEKEGLFCEKIFGPVKDWECHCGKYKRVRHKGIVCDRCGVEVTTSKVRRERMGHIELAAPVCHIWYLKGIPSRMGLLLDMSPKVLEKVIYFVSYIVLDPGDTPLLKKQLLNEREYRENRDRYGEAFKAGIGAEAVKSLLYEVELDKMSSDLKEEIATTTGQRKSRAIKRLEVVESFRLSGNDPMWMILDVLPVIPPDLRPMVQLDGGRFATSDLNDLYRRVINRNNRLKRLLDLGAPDIIVRNEKRMLQEAVDALVDNGRRGRPVTGPGNRPLKSLSDMLKGKQGRFRQNLLGKRVDYSGRSVIVVGPNLKMHQCGLPKEMALELFKPFVMKKLVDKAIASNIKSAKKMVERGREEVWDILDDVIKEHPVLLNRAPTLHRLGIQAFEPVLVEGRALQLHPLVCTAYNADFDGDQMAVHVPLSAEAQTEARLLMLASNNILNPKDGKPVVTPTQDMVIGLYYLTFISAEAFSKENPRAFSSTDEARMAFELGQIDLHEKIRVKMSVPQKTGREILKSHEAQTFLEEIVDTSVGRIIFNDAIPTSLGFYNEIIDKKKLGNIVYECYRLEGNARTADMLDSLKSLGYEFSTRAGITVGVTDFETPLAKYDILQEADQEVEAIERDYEVGLITDEERHAQVVEIWNQATDDVTEVLKNSLSEDNPVYMMATSGARGNFQQIRQLAGMRGLMADPSGKIIDLPIKANFREGLTVLEYFISTHGARKGLADTALRTADSGYLTRRLVDVSQDVIVREDDCESVEGIWVGRIMEGSQLIEPLHQRIIGRVSVDTVIHPDTGEILVEENQMIDDDIGYEIERAGIEKVKIRSVLTCKTRHGVCKKCYGRNLATGYNVEIGEAVGILAAQSIGEPGTQLTMRTFHTGGVAGDDITRGLPRVEELFEVRKPKGQAVVVEVNGKVRFGENKGRREVEVLGENGEVLGTYPVHYGSRLKFEEGTEVEIGDALTEGPLNPHDILKTKGLQEVQRYLLQEVQKVYRSQGVDISDKHIEIMIRQMLKKVKIEDPGDTSLLPGAFVDISSFEDENNREIRAGGLPATCSPMLLGITKASLNTDSFLSAASFQETTKVLTEAAIKGKIDHLIGLKENVIIGKLIPAGTGYSAYRETSISEAPESENMVSD</sequence>
<name>RPOC_SYNWW</name>
<dbReference type="EC" id="2.7.7.6" evidence="1"/>
<dbReference type="EMBL" id="CP000448">
    <property type="protein sequence ID" value="ABI69631.1"/>
    <property type="molecule type" value="Genomic_DNA"/>
</dbReference>
<dbReference type="RefSeq" id="WP_011641715.1">
    <property type="nucleotide sequence ID" value="NC_008346.1"/>
</dbReference>
<dbReference type="SMR" id="Q0AUH3"/>
<dbReference type="STRING" id="335541.Swol_2340"/>
<dbReference type="KEGG" id="swo:Swol_2340"/>
<dbReference type="eggNOG" id="COG0086">
    <property type="taxonomic scope" value="Bacteria"/>
</dbReference>
<dbReference type="HOGENOM" id="CLU_000524_3_1_9"/>
<dbReference type="OrthoDB" id="9815296at2"/>
<dbReference type="Proteomes" id="UP000001968">
    <property type="component" value="Chromosome"/>
</dbReference>
<dbReference type="GO" id="GO:0000428">
    <property type="term" value="C:DNA-directed RNA polymerase complex"/>
    <property type="evidence" value="ECO:0007669"/>
    <property type="project" value="UniProtKB-KW"/>
</dbReference>
<dbReference type="GO" id="GO:0003677">
    <property type="term" value="F:DNA binding"/>
    <property type="evidence" value="ECO:0007669"/>
    <property type="project" value="UniProtKB-UniRule"/>
</dbReference>
<dbReference type="GO" id="GO:0003899">
    <property type="term" value="F:DNA-directed RNA polymerase activity"/>
    <property type="evidence" value="ECO:0007669"/>
    <property type="project" value="UniProtKB-UniRule"/>
</dbReference>
<dbReference type="GO" id="GO:0000287">
    <property type="term" value="F:magnesium ion binding"/>
    <property type="evidence" value="ECO:0007669"/>
    <property type="project" value="UniProtKB-UniRule"/>
</dbReference>
<dbReference type="GO" id="GO:0008270">
    <property type="term" value="F:zinc ion binding"/>
    <property type="evidence" value="ECO:0007669"/>
    <property type="project" value="UniProtKB-UniRule"/>
</dbReference>
<dbReference type="GO" id="GO:0006351">
    <property type="term" value="P:DNA-templated transcription"/>
    <property type="evidence" value="ECO:0007669"/>
    <property type="project" value="UniProtKB-UniRule"/>
</dbReference>
<dbReference type="CDD" id="cd02655">
    <property type="entry name" value="RNAP_beta'_C"/>
    <property type="match status" value="1"/>
</dbReference>
<dbReference type="CDD" id="cd01609">
    <property type="entry name" value="RNAP_beta'_N"/>
    <property type="match status" value="1"/>
</dbReference>
<dbReference type="FunFam" id="1.10.150.390:FF:000002">
    <property type="entry name" value="DNA-directed RNA polymerase subunit beta"/>
    <property type="match status" value="1"/>
</dbReference>
<dbReference type="FunFam" id="1.10.40.90:FF:000001">
    <property type="entry name" value="DNA-directed RNA polymerase subunit beta"/>
    <property type="match status" value="1"/>
</dbReference>
<dbReference type="FunFam" id="4.10.860.120:FF:000001">
    <property type="entry name" value="DNA-directed RNA polymerase subunit beta"/>
    <property type="match status" value="1"/>
</dbReference>
<dbReference type="Gene3D" id="1.10.132.30">
    <property type="match status" value="1"/>
</dbReference>
<dbReference type="Gene3D" id="1.10.150.390">
    <property type="match status" value="1"/>
</dbReference>
<dbReference type="Gene3D" id="1.10.1790.20">
    <property type="match status" value="1"/>
</dbReference>
<dbReference type="Gene3D" id="1.10.40.90">
    <property type="match status" value="1"/>
</dbReference>
<dbReference type="Gene3D" id="2.40.40.20">
    <property type="match status" value="1"/>
</dbReference>
<dbReference type="Gene3D" id="2.40.50.100">
    <property type="match status" value="1"/>
</dbReference>
<dbReference type="Gene3D" id="4.10.860.120">
    <property type="entry name" value="RNA polymerase II, clamp domain"/>
    <property type="match status" value="1"/>
</dbReference>
<dbReference type="Gene3D" id="1.10.274.100">
    <property type="entry name" value="RNA polymerase Rpb1, domain 3"/>
    <property type="match status" value="1"/>
</dbReference>
<dbReference type="HAMAP" id="MF_01322">
    <property type="entry name" value="RNApol_bact_RpoC"/>
    <property type="match status" value="1"/>
</dbReference>
<dbReference type="InterPro" id="IPR045867">
    <property type="entry name" value="DNA-dir_RpoC_beta_prime"/>
</dbReference>
<dbReference type="InterPro" id="IPR012754">
    <property type="entry name" value="DNA-dir_RpoC_beta_prime_bact"/>
</dbReference>
<dbReference type="InterPro" id="IPR000722">
    <property type="entry name" value="RNA_pol_asu"/>
</dbReference>
<dbReference type="InterPro" id="IPR006592">
    <property type="entry name" value="RNA_pol_N"/>
</dbReference>
<dbReference type="InterPro" id="IPR007080">
    <property type="entry name" value="RNA_pol_Rpb1_1"/>
</dbReference>
<dbReference type="InterPro" id="IPR007066">
    <property type="entry name" value="RNA_pol_Rpb1_3"/>
</dbReference>
<dbReference type="InterPro" id="IPR042102">
    <property type="entry name" value="RNA_pol_Rpb1_3_sf"/>
</dbReference>
<dbReference type="InterPro" id="IPR007083">
    <property type="entry name" value="RNA_pol_Rpb1_4"/>
</dbReference>
<dbReference type="InterPro" id="IPR007081">
    <property type="entry name" value="RNA_pol_Rpb1_5"/>
</dbReference>
<dbReference type="InterPro" id="IPR044893">
    <property type="entry name" value="RNA_pol_Rpb1_clamp_domain"/>
</dbReference>
<dbReference type="InterPro" id="IPR038120">
    <property type="entry name" value="Rpb1_funnel_sf"/>
</dbReference>
<dbReference type="NCBIfam" id="NF011498">
    <property type="entry name" value="PRK14906.1"/>
    <property type="match status" value="1"/>
</dbReference>
<dbReference type="NCBIfam" id="TIGR02386">
    <property type="entry name" value="rpoC_TIGR"/>
    <property type="match status" value="1"/>
</dbReference>
<dbReference type="PANTHER" id="PTHR19376">
    <property type="entry name" value="DNA-DIRECTED RNA POLYMERASE"/>
    <property type="match status" value="1"/>
</dbReference>
<dbReference type="PANTHER" id="PTHR19376:SF54">
    <property type="entry name" value="DNA-DIRECTED RNA POLYMERASE SUBUNIT BETA"/>
    <property type="match status" value="1"/>
</dbReference>
<dbReference type="Pfam" id="PF04997">
    <property type="entry name" value="RNA_pol_Rpb1_1"/>
    <property type="match status" value="1"/>
</dbReference>
<dbReference type="Pfam" id="PF00623">
    <property type="entry name" value="RNA_pol_Rpb1_2"/>
    <property type="match status" value="2"/>
</dbReference>
<dbReference type="Pfam" id="PF04983">
    <property type="entry name" value="RNA_pol_Rpb1_3"/>
    <property type="match status" value="1"/>
</dbReference>
<dbReference type="Pfam" id="PF05000">
    <property type="entry name" value="RNA_pol_Rpb1_4"/>
    <property type="match status" value="1"/>
</dbReference>
<dbReference type="Pfam" id="PF04998">
    <property type="entry name" value="RNA_pol_Rpb1_5"/>
    <property type="match status" value="2"/>
</dbReference>
<dbReference type="SMART" id="SM00663">
    <property type="entry name" value="RPOLA_N"/>
    <property type="match status" value="1"/>
</dbReference>
<dbReference type="SUPFAM" id="SSF64484">
    <property type="entry name" value="beta and beta-prime subunits of DNA dependent RNA-polymerase"/>
    <property type="match status" value="1"/>
</dbReference>
<comment type="function">
    <text evidence="1">DNA-dependent RNA polymerase catalyzes the transcription of DNA into RNA using the four ribonucleoside triphosphates as substrates.</text>
</comment>
<comment type="catalytic activity">
    <reaction evidence="1">
        <text>RNA(n) + a ribonucleoside 5'-triphosphate = RNA(n+1) + diphosphate</text>
        <dbReference type="Rhea" id="RHEA:21248"/>
        <dbReference type="Rhea" id="RHEA-COMP:14527"/>
        <dbReference type="Rhea" id="RHEA-COMP:17342"/>
        <dbReference type="ChEBI" id="CHEBI:33019"/>
        <dbReference type="ChEBI" id="CHEBI:61557"/>
        <dbReference type="ChEBI" id="CHEBI:140395"/>
        <dbReference type="EC" id="2.7.7.6"/>
    </reaction>
</comment>
<comment type="cofactor">
    <cofactor evidence="1">
        <name>Mg(2+)</name>
        <dbReference type="ChEBI" id="CHEBI:18420"/>
    </cofactor>
    <text evidence="1">Binds 1 Mg(2+) ion per subunit.</text>
</comment>
<comment type="cofactor">
    <cofactor evidence="1">
        <name>Zn(2+)</name>
        <dbReference type="ChEBI" id="CHEBI:29105"/>
    </cofactor>
    <text evidence="1">Binds 2 Zn(2+) ions per subunit.</text>
</comment>
<comment type="subunit">
    <text evidence="1">The RNAP catalytic core consists of 2 alpha, 1 beta, 1 beta' and 1 omega subunit. When a sigma factor is associated with the core the holoenzyme is formed, which can initiate transcription.</text>
</comment>
<comment type="similarity">
    <text evidence="1">Belongs to the RNA polymerase beta' chain family.</text>
</comment>
<feature type="chain" id="PRO_0000353445" description="DNA-directed RNA polymerase subunit beta'">
    <location>
        <begin position="1"/>
        <end position="1181"/>
    </location>
</feature>
<feature type="binding site" evidence="1">
    <location>
        <position position="68"/>
    </location>
    <ligand>
        <name>Zn(2+)</name>
        <dbReference type="ChEBI" id="CHEBI:29105"/>
        <label>1</label>
    </ligand>
</feature>
<feature type="binding site" evidence="1">
    <location>
        <position position="70"/>
    </location>
    <ligand>
        <name>Zn(2+)</name>
        <dbReference type="ChEBI" id="CHEBI:29105"/>
        <label>1</label>
    </ligand>
</feature>
<feature type="binding site" evidence="1">
    <location>
        <position position="83"/>
    </location>
    <ligand>
        <name>Zn(2+)</name>
        <dbReference type="ChEBI" id="CHEBI:29105"/>
        <label>1</label>
    </ligand>
</feature>
<feature type="binding site" evidence="1">
    <location>
        <position position="86"/>
    </location>
    <ligand>
        <name>Zn(2+)</name>
        <dbReference type="ChEBI" id="CHEBI:29105"/>
        <label>1</label>
    </ligand>
</feature>
<feature type="binding site" evidence="1">
    <location>
        <position position="457"/>
    </location>
    <ligand>
        <name>Mg(2+)</name>
        <dbReference type="ChEBI" id="CHEBI:18420"/>
    </ligand>
</feature>
<feature type="binding site" evidence="1">
    <location>
        <position position="459"/>
    </location>
    <ligand>
        <name>Mg(2+)</name>
        <dbReference type="ChEBI" id="CHEBI:18420"/>
    </ligand>
</feature>
<feature type="binding site" evidence="1">
    <location>
        <position position="461"/>
    </location>
    <ligand>
        <name>Mg(2+)</name>
        <dbReference type="ChEBI" id="CHEBI:18420"/>
    </ligand>
</feature>
<feature type="binding site" evidence="1">
    <location>
        <position position="802"/>
    </location>
    <ligand>
        <name>Zn(2+)</name>
        <dbReference type="ChEBI" id="CHEBI:29105"/>
        <label>2</label>
    </ligand>
</feature>
<feature type="binding site" evidence="1">
    <location>
        <position position="876"/>
    </location>
    <ligand>
        <name>Zn(2+)</name>
        <dbReference type="ChEBI" id="CHEBI:29105"/>
        <label>2</label>
    </ligand>
</feature>
<feature type="binding site" evidence="1">
    <location>
        <position position="883"/>
    </location>
    <ligand>
        <name>Zn(2+)</name>
        <dbReference type="ChEBI" id="CHEBI:29105"/>
        <label>2</label>
    </ligand>
</feature>
<feature type="binding site" evidence="1">
    <location>
        <position position="886"/>
    </location>
    <ligand>
        <name>Zn(2+)</name>
        <dbReference type="ChEBI" id="CHEBI:29105"/>
        <label>2</label>
    </ligand>
</feature>
<keyword id="KW-0240">DNA-directed RNA polymerase</keyword>
<keyword id="KW-0460">Magnesium</keyword>
<keyword id="KW-0479">Metal-binding</keyword>
<keyword id="KW-0548">Nucleotidyltransferase</keyword>
<keyword id="KW-1185">Reference proteome</keyword>
<keyword id="KW-0804">Transcription</keyword>
<keyword id="KW-0808">Transferase</keyword>
<keyword id="KW-0862">Zinc</keyword>
<proteinExistence type="inferred from homology"/>